<reference key="1">
    <citation type="journal article" date="2003" name="Science">
        <title>Genome of Geobacter sulfurreducens: metal reduction in subsurface environments.</title>
        <authorList>
            <person name="Methe B.A."/>
            <person name="Nelson K.E."/>
            <person name="Eisen J.A."/>
            <person name="Paulsen I.T."/>
            <person name="Nelson W.C."/>
            <person name="Heidelberg J.F."/>
            <person name="Wu D."/>
            <person name="Wu M."/>
            <person name="Ward N.L."/>
            <person name="Beanan M.J."/>
            <person name="Dodson R.J."/>
            <person name="Madupu R."/>
            <person name="Brinkac L.M."/>
            <person name="Daugherty S.C."/>
            <person name="DeBoy R.T."/>
            <person name="Durkin A.S."/>
            <person name="Gwinn M.L."/>
            <person name="Kolonay J.F."/>
            <person name="Sullivan S.A."/>
            <person name="Haft D.H."/>
            <person name="Selengut J."/>
            <person name="Davidsen T.M."/>
            <person name="Zafar N."/>
            <person name="White O."/>
            <person name="Tran B."/>
            <person name="Romero C."/>
            <person name="Forberger H.A."/>
            <person name="Weidman J.F."/>
            <person name="Khouri H.M."/>
            <person name="Feldblyum T.V."/>
            <person name="Utterback T.R."/>
            <person name="Van Aken S.E."/>
            <person name="Lovley D.R."/>
            <person name="Fraser C.M."/>
        </authorList>
    </citation>
    <scope>NUCLEOTIDE SEQUENCE [LARGE SCALE GENOMIC DNA]</scope>
    <source>
        <strain>ATCC 51573 / DSM 12127 / PCA</strain>
    </source>
</reference>
<evidence type="ECO:0000255" key="1">
    <source>
        <dbReference type="HAMAP-Rule" id="MF_00279"/>
    </source>
</evidence>
<keyword id="KW-0963">Cytoplasm</keyword>
<keyword id="KW-0664">Pyridoxine biosynthesis</keyword>
<keyword id="KW-1185">Reference proteome</keyword>
<keyword id="KW-0808">Transferase</keyword>
<comment type="function">
    <text evidence="1">Catalyzes the complicated ring closure reaction between the two acyclic compounds 1-deoxy-D-xylulose-5-phosphate (DXP) and 3-amino-2-oxopropyl phosphate (1-amino-acetone-3-phosphate or AAP) to form pyridoxine 5'-phosphate (PNP) and inorganic phosphate.</text>
</comment>
<comment type="catalytic activity">
    <reaction evidence="1">
        <text>3-amino-2-oxopropyl phosphate + 1-deoxy-D-xylulose 5-phosphate = pyridoxine 5'-phosphate + phosphate + 2 H2O + H(+)</text>
        <dbReference type="Rhea" id="RHEA:15265"/>
        <dbReference type="ChEBI" id="CHEBI:15377"/>
        <dbReference type="ChEBI" id="CHEBI:15378"/>
        <dbReference type="ChEBI" id="CHEBI:43474"/>
        <dbReference type="ChEBI" id="CHEBI:57279"/>
        <dbReference type="ChEBI" id="CHEBI:57792"/>
        <dbReference type="ChEBI" id="CHEBI:58589"/>
        <dbReference type="EC" id="2.6.99.2"/>
    </reaction>
</comment>
<comment type="pathway">
    <text evidence="1">Cofactor biosynthesis; pyridoxine 5'-phosphate biosynthesis; pyridoxine 5'-phosphate from D-erythrose 4-phosphate: step 5/5.</text>
</comment>
<comment type="subunit">
    <text evidence="1">Homooctamer; tetramer of dimers.</text>
</comment>
<comment type="subcellular location">
    <subcellularLocation>
        <location evidence="1">Cytoplasm</location>
    </subcellularLocation>
</comment>
<comment type="similarity">
    <text evidence="1">Belongs to the PNP synthase family.</text>
</comment>
<proteinExistence type="inferred from homology"/>
<organism>
    <name type="scientific">Geobacter sulfurreducens (strain ATCC 51573 / DSM 12127 / PCA)</name>
    <dbReference type="NCBI Taxonomy" id="243231"/>
    <lineage>
        <taxon>Bacteria</taxon>
        <taxon>Pseudomonadati</taxon>
        <taxon>Thermodesulfobacteriota</taxon>
        <taxon>Desulfuromonadia</taxon>
        <taxon>Geobacterales</taxon>
        <taxon>Geobacteraceae</taxon>
        <taxon>Geobacter</taxon>
    </lineage>
</organism>
<accession>Q3V8C9</accession>
<gene>
    <name evidence="1" type="primary">pdxJ</name>
    <name type="ordered locus">GSU1804</name>
</gene>
<sequence length="239" mass="25887">MAKLGVNIDHVATIRQARGGVEPDPVAAAAIAEFAGADGITVHLREDRRHIQDRDLRLLRQTVKTKLNLEMAATDEMVGIALSVKPDMCTLVPERRQELTTEGGLDVRVGMQALADAIGRLQDGGIVVSLFIDPDADQVKASSKVGADYIEIHTGTFAEAREWKKEQAELERIENAIKLGTKLGLGINAGHGLNYTNVRKVAALGGIEEFNIGHSIISRAVFTGLDRAVRDMVDLVKYA</sequence>
<feature type="chain" id="PRO_0000231809" description="Pyridoxine 5'-phosphate synthase">
    <location>
        <begin position="1"/>
        <end position="239"/>
    </location>
</feature>
<feature type="active site" description="Proton acceptor" evidence="1">
    <location>
        <position position="43"/>
    </location>
</feature>
<feature type="active site" description="Proton acceptor" evidence="1">
    <location>
        <position position="70"/>
    </location>
</feature>
<feature type="active site" description="Proton donor" evidence="1">
    <location>
        <position position="191"/>
    </location>
</feature>
<feature type="binding site" evidence="1">
    <location>
        <position position="7"/>
    </location>
    <ligand>
        <name>3-amino-2-oxopropyl phosphate</name>
        <dbReference type="ChEBI" id="CHEBI:57279"/>
    </ligand>
</feature>
<feature type="binding site" evidence="1">
    <location>
        <begin position="9"/>
        <end position="10"/>
    </location>
    <ligand>
        <name>1-deoxy-D-xylulose 5-phosphate</name>
        <dbReference type="ChEBI" id="CHEBI:57792"/>
    </ligand>
</feature>
<feature type="binding site" evidence="1">
    <location>
        <position position="18"/>
    </location>
    <ligand>
        <name>3-amino-2-oxopropyl phosphate</name>
        <dbReference type="ChEBI" id="CHEBI:57279"/>
    </ligand>
</feature>
<feature type="binding site" evidence="1">
    <location>
        <position position="45"/>
    </location>
    <ligand>
        <name>1-deoxy-D-xylulose 5-phosphate</name>
        <dbReference type="ChEBI" id="CHEBI:57792"/>
    </ligand>
</feature>
<feature type="binding site" evidence="1">
    <location>
        <position position="50"/>
    </location>
    <ligand>
        <name>1-deoxy-D-xylulose 5-phosphate</name>
        <dbReference type="ChEBI" id="CHEBI:57792"/>
    </ligand>
</feature>
<feature type="binding site" evidence="1">
    <location>
        <position position="100"/>
    </location>
    <ligand>
        <name>1-deoxy-D-xylulose 5-phosphate</name>
        <dbReference type="ChEBI" id="CHEBI:57792"/>
    </ligand>
</feature>
<feature type="binding site" evidence="1">
    <location>
        <position position="192"/>
    </location>
    <ligand>
        <name>3-amino-2-oxopropyl phosphate</name>
        <dbReference type="ChEBI" id="CHEBI:57279"/>
    </ligand>
</feature>
<feature type="binding site" evidence="1">
    <location>
        <begin position="213"/>
        <end position="214"/>
    </location>
    <ligand>
        <name>3-amino-2-oxopropyl phosphate</name>
        <dbReference type="ChEBI" id="CHEBI:57279"/>
    </ligand>
</feature>
<feature type="site" description="Transition state stabilizer" evidence="1">
    <location>
        <position position="151"/>
    </location>
</feature>
<protein>
    <recommendedName>
        <fullName evidence="1">Pyridoxine 5'-phosphate synthase</fullName>
        <shortName evidence="1">PNP synthase</shortName>
        <ecNumber evidence="1">2.6.99.2</ecNumber>
    </recommendedName>
</protein>
<dbReference type="EC" id="2.6.99.2" evidence="1"/>
<dbReference type="EMBL" id="AE017180">
    <property type="protein sequence ID" value="AAR35181.1"/>
    <property type="molecule type" value="Genomic_DNA"/>
</dbReference>
<dbReference type="RefSeq" id="NP_952854.1">
    <property type="nucleotide sequence ID" value="NC_002939.5"/>
</dbReference>
<dbReference type="RefSeq" id="WP_010942449.1">
    <property type="nucleotide sequence ID" value="NC_002939.5"/>
</dbReference>
<dbReference type="SMR" id="Q3V8C9"/>
<dbReference type="FunCoup" id="Q3V8C9">
    <property type="interactions" value="370"/>
</dbReference>
<dbReference type="STRING" id="243231.GSU1804"/>
<dbReference type="EnsemblBacteria" id="AAR35181">
    <property type="protein sequence ID" value="AAR35181"/>
    <property type="gene ID" value="GSU1804"/>
</dbReference>
<dbReference type="KEGG" id="gsu:GSU1804"/>
<dbReference type="PATRIC" id="fig|243231.5.peg.1842"/>
<dbReference type="eggNOG" id="COG0854">
    <property type="taxonomic scope" value="Bacteria"/>
</dbReference>
<dbReference type="HOGENOM" id="CLU_074563_0_0_7"/>
<dbReference type="InParanoid" id="Q3V8C9"/>
<dbReference type="OrthoDB" id="9806590at2"/>
<dbReference type="UniPathway" id="UPA00244">
    <property type="reaction ID" value="UER00313"/>
</dbReference>
<dbReference type="Proteomes" id="UP000000577">
    <property type="component" value="Chromosome"/>
</dbReference>
<dbReference type="GO" id="GO:0005829">
    <property type="term" value="C:cytosol"/>
    <property type="evidence" value="ECO:0000318"/>
    <property type="project" value="GO_Central"/>
</dbReference>
<dbReference type="GO" id="GO:0033856">
    <property type="term" value="F:pyridoxine 5'-phosphate synthase activity"/>
    <property type="evidence" value="ECO:0000318"/>
    <property type="project" value="GO_Central"/>
</dbReference>
<dbReference type="GO" id="GO:0008615">
    <property type="term" value="P:pyridoxine biosynthetic process"/>
    <property type="evidence" value="ECO:0000318"/>
    <property type="project" value="GO_Central"/>
</dbReference>
<dbReference type="CDD" id="cd00003">
    <property type="entry name" value="PNPsynthase"/>
    <property type="match status" value="1"/>
</dbReference>
<dbReference type="FunFam" id="3.20.20.70:FF:000042">
    <property type="entry name" value="Pyridoxine 5'-phosphate synthase"/>
    <property type="match status" value="1"/>
</dbReference>
<dbReference type="Gene3D" id="3.20.20.70">
    <property type="entry name" value="Aldolase class I"/>
    <property type="match status" value="1"/>
</dbReference>
<dbReference type="HAMAP" id="MF_00279">
    <property type="entry name" value="PdxJ"/>
    <property type="match status" value="1"/>
</dbReference>
<dbReference type="InterPro" id="IPR013785">
    <property type="entry name" value="Aldolase_TIM"/>
</dbReference>
<dbReference type="InterPro" id="IPR004569">
    <property type="entry name" value="PyrdxlP_synth_PdxJ"/>
</dbReference>
<dbReference type="InterPro" id="IPR036130">
    <property type="entry name" value="Pyridoxine-5'_phos_synth"/>
</dbReference>
<dbReference type="NCBIfam" id="TIGR00559">
    <property type="entry name" value="pdxJ"/>
    <property type="match status" value="1"/>
</dbReference>
<dbReference type="NCBIfam" id="NF003623">
    <property type="entry name" value="PRK05265.1-1"/>
    <property type="match status" value="1"/>
</dbReference>
<dbReference type="NCBIfam" id="NF003625">
    <property type="entry name" value="PRK05265.1-3"/>
    <property type="match status" value="1"/>
</dbReference>
<dbReference type="NCBIfam" id="NF003627">
    <property type="entry name" value="PRK05265.1-5"/>
    <property type="match status" value="1"/>
</dbReference>
<dbReference type="PANTHER" id="PTHR30456">
    <property type="entry name" value="PYRIDOXINE 5'-PHOSPHATE SYNTHASE"/>
    <property type="match status" value="1"/>
</dbReference>
<dbReference type="PANTHER" id="PTHR30456:SF0">
    <property type="entry name" value="PYRIDOXINE 5'-PHOSPHATE SYNTHASE"/>
    <property type="match status" value="1"/>
</dbReference>
<dbReference type="Pfam" id="PF03740">
    <property type="entry name" value="PdxJ"/>
    <property type="match status" value="1"/>
</dbReference>
<dbReference type="SUPFAM" id="SSF63892">
    <property type="entry name" value="Pyridoxine 5'-phosphate synthase"/>
    <property type="match status" value="1"/>
</dbReference>
<name>PDXJ_GEOSL</name>